<name>SECA_PEA</name>
<organism>
    <name type="scientific">Pisum sativum</name>
    <name type="common">Garden pea</name>
    <name type="synonym">Lathyrus oleraceus</name>
    <dbReference type="NCBI Taxonomy" id="3888"/>
    <lineage>
        <taxon>Eukaryota</taxon>
        <taxon>Viridiplantae</taxon>
        <taxon>Streptophyta</taxon>
        <taxon>Embryophyta</taxon>
        <taxon>Tracheophyta</taxon>
        <taxon>Spermatophyta</taxon>
        <taxon>Magnoliopsida</taxon>
        <taxon>eudicotyledons</taxon>
        <taxon>Gunneridae</taxon>
        <taxon>Pentapetalae</taxon>
        <taxon>rosids</taxon>
        <taxon>fabids</taxon>
        <taxon>Fabales</taxon>
        <taxon>Fabaceae</taxon>
        <taxon>Papilionoideae</taxon>
        <taxon>50 kb inversion clade</taxon>
        <taxon>NPAAA clade</taxon>
        <taxon>Hologalegina</taxon>
        <taxon>IRL clade</taxon>
        <taxon>Fabeae</taxon>
        <taxon>Pisum</taxon>
    </lineage>
</organism>
<dbReference type="EC" id="7.4.2.4" evidence="5"/>
<dbReference type="EMBL" id="X82404">
    <property type="protein sequence ID" value="CAA57798.1"/>
    <property type="molecule type" value="mRNA"/>
</dbReference>
<dbReference type="PIR" id="S65668">
    <property type="entry name" value="S65668"/>
</dbReference>
<dbReference type="SMR" id="Q41062"/>
<dbReference type="KEGG" id="ag:CAA57798"/>
<dbReference type="GO" id="GO:0009570">
    <property type="term" value="C:chloroplast stroma"/>
    <property type="evidence" value="ECO:0000314"/>
    <property type="project" value="UniProtKB"/>
</dbReference>
<dbReference type="GO" id="GO:0009535">
    <property type="term" value="C:chloroplast thylakoid membrane"/>
    <property type="evidence" value="ECO:0007669"/>
    <property type="project" value="UniProtKB-SubCell"/>
</dbReference>
<dbReference type="GO" id="GO:0005524">
    <property type="term" value="F:ATP binding"/>
    <property type="evidence" value="ECO:0000314"/>
    <property type="project" value="UniProtKB"/>
</dbReference>
<dbReference type="GO" id="GO:0016464">
    <property type="term" value="F:chloroplast protein-transporting ATPase activity"/>
    <property type="evidence" value="ECO:0007669"/>
    <property type="project" value="UniProtKB-EC"/>
</dbReference>
<dbReference type="GO" id="GO:0008320">
    <property type="term" value="F:protein transmembrane transporter activity"/>
    <property type="evidence" value="ECO:0000314"/>
    <property type="project" value="UniProtKB"/>
</dbReference>
<dbReference type="GO" id="GO:0006886">
    <property type="term" value="P:intracellular protein transport"/>
    <property type="evidence" value="ECO:0007669"/>
    <property type="project" value="InterPro"/>
</dbReference>
<dbReference type="GO" id="GO:0017038">
    <property type="term" value="P:protein import"/>
    <property type="evidence" value="ECO:0007669"/>
    <property type="project" value="InterPro"/>
</dbReference>
<dbReference type="GO" id="GO:0006605">
    <property type="term" value="P:protein targeting"/>
    <property type="evidence" value="ECO:0007669"/>
    <property type="project" value="InterPro"/>
</dbReference>
<dbReference type="GO" id="GO:0071806">
    <property type="term" value="P:protein transmembrane transport"/>
    <property type="evidence" value="ECO:0000314"/>
    <property type="project" value="UniProtKB"/>
</dbReference>
<dbReference type="CDD" id="cd17928">
    <property type="entry name" value="DEXDc_SecA"/>
    <property type="match status" value="1"/>
</dbReference>
<dbReference type="CDD" id="cd18803">
    <property type="entry name" value="SF2_C_secA"/>
    <property type="match status" value="1"/>
</dbReference>
<dbReference type="FunFam" id="3.90.1440.10:FF:000003">
    <property type="entry name" value="Preprotein translocase SecA subunit"/>
    <property type="match status" value="1"/>
</dbReference>
<dbReference type="FunFam" id="3.40.50.300:FF:000113">
    <property type="entry name" value="Preprotein translocase subunit SecA"/>
    <property type="match status" value="1"/>
</dbReference>
<dbReference type="FunFam" id="1.10.3060.10:FF:000003">
    <property type="entry name" value="Protein translocase subunit SecA"/>
    <property type="match status" value="1"/>
</dbReference>
<dbReference type="FunFam" id="3.40.50.300:FF:000334">
    <property type="entry name" value="Protein translocase subunit SecA"/>
    <property type="match status" value="1"/>
</dbReference>
<dbReference type="Gene3D" id="1.10.3060.10">
    <property type="entry name" value="Helical scaffold and wing domains of SecA"/>
    <property type="match status" value="1"/>
</dbReference>
<dbReference type="Gene3D" id="3.40.50.300">
    <property type="entry name" value="P-loop containing nucleotide triphosphate hydrolases"/>
    <property type="match status" value="2"/>
</dbReference>
<dbReference type="Gene3D" id="3.90.1440.10">
    <property type="entry name" value="SecA, preprotein cross-linking domain"/>
    <property type="match status" value="1"/>
</dbReference>
<dbReference type="HAMAP" id="MF_01382">
    <property type="entry name" value="SecA"/>
    <property type="match status" value="1"/>
</dbReference>
<dbReference type="InterPro" id="IPR014001">
    <property type="entry name" value="Helicase_ATP-bd"/>
</dbReference>
<dbReference type="InterPro" id="IPR027417">
    <property type="entry name" value="P-loop_NTPase"/>
</dbReference>
<dbReference type="InterPro" id="IPR000185">
    <property type="entry name" value="SecA"/>
</dbReference>
<dbReference type="InterPro" id="IPR020937">
    <property type="entry name" value="SecA_CS"/>
</dbReference>
<dbReference type="InterPro" id="IPR011115">
    <property type="entry name" value="SecA_DEAD"/>
</dbReference>
<dbReference type="InterPro" id="IPR014018">
    <property type="entry name" value="SecA_motor_DEAD"/>
</dbReference>
<dbReference type="InterPro" id="IPR011130">
    <property type="entry name" value="SecA_preprotein_X-link_dom"/>
</dbReference>
<dbReference type="InterPro" id="IPR044722">
    <property type="entry name" value="SecA_SF2_C"/>
</dbReference>
<dbReference type="InterPro" id="IPR011116">
    <property type="entry name" value="SecA_Wing/Scaffold"/>
</dbReference>
<dbReference type="InterPro" id="IPR036266">
    <property type="entry name" value="SecA_Wing/Scaffold_sf"/>
</dbReference>
<dbReference type="InterPro" id="IPR036670">
    <property type="entry name" value="SecA_X-link_sf"/>
</dbReference>
<dbReference type="NCBIfam" id="TIGR00963">
    <property type="entry name" value="secA"/>
    <property type="match status" value="1"/>
</dbReference>
<dbReference type="PANTHER" id="PTHR30612:SF0">
    <property type="entry name" value="CHLOROPLAST PROTEIN-TRANSPORTING ATPASE"/>
    <property type="match status" value="1"/>
</dbReference>
<dbReference type="PANTHER" id="PTHR30612">
    <property type="entry name" value="SECA INNER MEMBRANE COMPONENT OF SEC PROTEIN SECRETION SYSTEM"/>
    <property type="match status" value="1"/>
</dbReference>
<dbReference type="Pfam" id="PF21090">
    <property type="entry name" value="P-loop_SecA"/>
    <property type="match status" value="1"/>
</dbReference>
<dbReference type="Pfam" id="PF07517">
    <property type="entry name" value="SecA_DEAD"/>
    <property type="match status" value="1"/>
</dbReference>
<dbReference type="Pfam" id="PF01043">
    <property type="entry name" value="SecA_PP_bind"/>
    <property type="match status" value="1"/>
</dbReference>
<dbReference type="Pfam" id="PF07516">
    <property type="entry name" value="SecA_SW"/>
    <property type="match status" value="1"/>
</dbReference>
<dbReference type="PRINTS" id="PR00906">
    <property type="entry name" value="SECA"/>
</dbReference>
<dbReference type="SMART" id="SM00957">
    <property type="entry name" value="SecA_DEAD"/>
    <property type="match status" value="1"/>
</dbReference>
<dbReference type="SMART" id="SM00958">
    <property type="entry name" value="SecA_PP_bind"/>
    <property type="match status" value="1"/>
</dbReference>
<dbReference type="SUPFAM" id="SSF81886">
    <property type="entry name" value="Helical scaffold and wing domains of SecA"/>
    <property type="match status" value="1"/>
</dbReference>
<dbReference type="SUPFAM" id="SSF52540">
    <property type="entry name" value="P-loop containing nucleoside triphosphate hydrolases"/>
    <property type="match status" value="2"/>
</dbReference>
<dbReference type="SUPFAM" id="SSF81767">
    <property type="entry name" value="Pre-protein crosslinking domain of SecA"/>
    <property type="match status" value="1"/>
</dbReference>
<dbReference type="PROSITE" id="PS01312">
    <property type="entry name" value="SECA"/>
    <property type="match status" value="1"/>
</dbReference>
<dbReference type="PROSITE" id="PS51196">
    <property type="entry name" value="SECA_MOTOR_DEAD"/>
    <property type="match status" value="1"/>
</dbReference>
<evidence type="ECO:0000255" key="1"/>
<evidence type="ECO:0000256" key="2">
    <source>
        <dbReference type="SAM" id="MobiDB-lite"/>
    </source>
</evidence>
<evidence type="ECO:0000269" key="3">
    <source>
    </source>
</evidence>
<evidence type="ECO:0000269" key="4">
    <source>
    </source>
</evidence>
<evidence type="ECO:0000269" key="5">
    <source>
    </source>
</evidence>
<evidence type="ECO:0000303" key="6">
    <source>
    </source>
</evidence>
<evidence type="ECO:0000305" key="7"/>
<feature type="transit peptide" description="Chloroplast" evidence="1">
    <location>
        <begin position="1"/>
        <end position="59"/>
    </location>
</feature>
<feature type="chain" id="PRO_0000031986" description="Protein translocase subunit SecA, chloroplastic">
    <location>
        <begin position="60"/>
        <end position="1011"/>
    </location>
</feature>
<feature type="region of interest" description="Disordered" evidence="2">
    <location>
        <begin position="1"/>
        <end position="22"/>
    </location>
</feature>
<feature type="region of interest" description="Disordered" evidence="2">
    <location>
        <begin position="976"/>
        <end position="1011"/>
    </location>
</feature>
<feature type="compositionally biased region" description="Polar residues" evidence="2">
    <location>
        <begin position="1"/>
        <end position="17"/>
    </location>
</feature>
<feature type="binding site" evidence="1">
    <location>
        <begin position="164"/>
        <end position="171"/>
    </location>
    <ligand>
        <name>ATP</name>
        <dbReference type="ChEBI" id="CHEBI:30616"/>
    </ligand>
</feature>
<feature type="sequence conflict" description="In Ref. 2." evidence="7" ref="2">
    <original>S</original>
    <variation>P</variation>
    <location>
        <position position="294"/>
    </location>
</feature>
<sequence length="1011" mass="114076">MATSSLCSSFTSQTCNPHSRPHRKTLTLPGSVFLCRQFHLNSPSVSKTRRIRTRQSGPVASLGGLLGGIFKGTDTGEATRKQYAAIVNTINGLEPKISALSDSELRDMTFASRERAQKGESLDSLLPEAFAVVREASKRVLGLRPFDVQLIGGMVLHKGEIAEMRTGEGKTLVAILPAYLNALVGKGVHVVTVNDYLARRDCEWVGQVPRFLGMKVGLIQQNMTSEQKKENYLCDITYVTNSELGFDFLRDNLATSVEELVIRGFNYCVIDEVDSILIDEARTPLIISGPAEKSSDQYFKAAKIADAFERDIHYTVDEKQKSVLLSEQGYEDAEEILAVKDLYDPREQWASFVINAIKAKELFLRDVNYIIRGKEVLIVDEFTGRVMQGRRWSDGLHQAVEAKEGLPIQNETVTLASISYQNFFLQFPKLCGMTGTAATEITEFESIYKLKVTIVPTNKPMIRKDESDVVFRATTGKWRAVVVEISRMNKTGRPVLVGTTSVEQSDSLSQQLKEAGILHEVLNAKPENVEREAEIVAQSGRLGAVTIATNMAGRGTDIILGGNAEFMARLKLREIMMPRVVKLVAEGEFVSVKKPPPSKTWKVNEKLFPCQLSNQNTELAEKAVQLAVKTWGKRSLTELEAEERLSYSCEKGPAQDEVIAELRNAFLEISKEYKVFTEEERKKVVAAGGLHVVGTERHESRRIDNQLRGRSGRQGDLGSSRFFLSLEDNIFRIFGGDRIQGLMRAFRVEDLPIESQMLTKALDEAQKKVENYFFDIRKQLFEYDEVLNSQRDRVYTERRRALQSVNLQSLLIEYAELTIDDILEANIGSDAPKESWDLDKLIAKIQQYCYLLTDLTPDLLLNECSDYEGLRSYLRLRGKEAYLQKRDIVEQQAPGLMKEAERFLILSNIDRLWKEHLQALKFVQQAVGLRGYAQRDPLIEYKLEGYNLFLEMMAQIRRNVIYSIYQFKPVLLKQDQDKMENQKSGKRNARPPTDTNPDPVGTVEPSTSASS</sequence>
<keyword id="KW-0067">ATP-binding</keyword>
<keyword id="KW-0150">Chloroplast</keyword>
<keyword id="KW-0472">Membrane</keyword>
<keyword id="KW-0547">Nucleotide-binding</keyword>
<keyword id="KW-0934">Plastid</keyword>
<keyword id="KW-0653">Protein transport</keyword>
<keyword id="KW-0793">Thylakoid</keyword>
<keyword id="KW-0809">Transit peptide</keyword>
<keyword id="KW-1278">Translocase</keyword>
<keyword id="KW-0811">Translocation</keyword>
<keyword id="KW-0813">Transport</keyword>
<reference key="1">
    <citation type="journal article" date="1995" name="FEBS Lett.">
        <title>Isolation and characterization of the cDNA for pea chloroplast SecA. Evolutionary conservation of the bacterial-type SecA-dependent protein transport within chloroplasts.</title>
        <authorList>
            <person name="Nohara T."/>
            <person name="Nakai M."/>
            <person name="Goto A."/>
            <person name="Endo T."/>
        </authorList>
    </citation>
    <scope>NUCLEOTIDE SEQUENCE [MRNA]</scope>
    <scope>FUNCTION</scope>
    <source>
        <strain>cv. Alaska</strain>
    </source>
</reference>
<reference key="2">
    <citation type="journal article" date="1994" name="J. Biol. Chem.">
        <title>Identification of the SecA protein homolog in pea chloroplasts and its possible involvement in thylakoidal protein transport.</title>
        <authorList>
            <person name="Nakai M."/>
            <person name="Goto A."/>
            <person name="Nohara T."/>
            <person name="Sugita D."/>
            <person name="Endo T."/>
        </authorList>
    </citation>
    <scope>NUCLEOTIDE SEQUENCE OF 279-554</scope>
    <scope>FUNCTION</scope>
    <scope>SUBCELLULAR LOCATION</scope>
</reference>
<reference key="3">
    <citation type="journal article" date="1997" name="Eur. J. Biochem.">
        <title>Chloroplast SecA functions as a membrane-associated component of the Sec-like protein translocase of pea chloroplasts.</title>
        <authorList>
            <person name="Haward S.R."/>
            <person name="Napier J.A."/>
            <person name="Gray J.C."/>
        </authorList>
    </citation>
    <scope>FUNCTION</scope>
    <scope>CATALYTIC ACTIVITY</scope>
</reference>
<proteinExistence type="evidence at protein level"/>
<accession>Q41062</accession>
<accession>Q9T2L2</accession>
<gene>
    <name evidence="6" type="primary">SecA</name>
</gene>
<protein>
    <recommendedName>
        <fullName evidence="7">Protein translocase subunit SecA, chloroplastic</fullName>
        <ecNumber evidence="5">7.4.2.4</ecNumber>
    </recommendedName>
</protein>
<comment type="function">
    <text evidence="3 4 5">Has a central role in coupling the hydrolysis of ATP to the transfer of proteins across the thylakoid membrane (PubMed:7758587, PubMed:7989297, PubMed:9342223). Facilitates the transport of precursor proteins from the chloroplast stroma to thylakoid lumen (PubMed:7758587, PubMed:7989297, PubMed:9342223).</text>
</comment>
<comment type="catalytic activity">
    <reaction evidence="5">
        <text>ATP + H2O + chloroplast-proteinSide 1 = ADP + phosphate + chloroplast-proteinSide 2.</text>
        <dbReference type="EC" id="7.4.2.4"/>
    </reaction>
</comment>
<comment type="subcellular location">
    <subcellularLocation>
        <location evidence="4">Plastid</location>
        <location evidence="4">Chloroplast stroma</location>
    </subcellularLocation>
    <subcellularLocation>
        <location evidence="4">Plastid</location>
        <location evidence="4">Chloroplast thylakoid membrane</location>
        <topology evidence="7">Peripheral membrane protein</topology>
    </subcellularLocation>
    <text evidence="4">A minor fraction is associated with the chloroplast thylakoid membrane.</text>
</comment>
<comment type="similarity">
    <text evidence="7">Belongs to the SecA family.</text>
</comment>